<dbReference type="EMBL" id="CP000851">
    <property type="protein sequence ID" value="ABV86850.1"/>
    <property type="molecule type" value="Genomic_DNA"/>
</dbReference>
<dbReference type="RefSeq" id="WP_012154774.1">
    <property type="nucleotide sequence ID" value="NC_009901.1"/>
</dbReference>
<dbReference type="SMR" id="A8H2R3"/>
<dbReference type="STRING" id="398579.Spea_1525"/>
<dbReference type="KEGG" id="spl:Spea_1525"/>
<dbReference type="eggNOG" id="COG0353">
    <property type="taxonomic scope" value="Bacteria"/>
</dbReference>
<dbReference type="HOGENOM" id="CLU_060739_1_2_6"/>
<dbReference type="OrthoDB" id="9802672at2"/>
<dbReference type="Proteomes" id="UP000002608">
    <property type="component" value="Chromosome"/>
</dbReference>
<dbReference type="GO" id="GO:0003677">
    <property type="term" value="F:DNA binding"/>
    <property type="evidence" value="ECO:0007669"/>
    <property type="project" value="UniProtKB-UniRule"/>
</dbReference>
<dbReference type="GO" id="GO:0008270">
    <property type="term" value="F:zinc ion binding"/>
    <property type="evidence" value="ECO:0007669"/>
    <property type="project" value="UniProtKB-KW"/>
</dbReference>
<dbReference type="GO" id="GO:0006310">
    <property type="term" value="P:DNA recombination"/>
    <property type="evidence" value="ECO:0007669"/>
    <property type="project" value="UniProtKB-UniRule"/>
</dbReference>
<dbReference type="GO" id="GO:0006281">
    <property type="term" value="P:DNA repair"/>
    <property type="evidence" value="ECO:0007669"/>
    <property type="project" value="UniProtKB-UniRule"/>
</dbReference>
<dbReference type="CDD" id="cd01025">
    <property type="entry name" value="TOPRIM_recR"/>
    <property type="match status" value="1"/>
</dbReference>
<dbReference type="FunFam" id="3.40.1360.10:FF:000001">
    <property type="entry name" value="Recombination protein RecR"/>
    <property type="match status" value="1"/>
</dbReference>
<dbReference type="Gene3D" id="3.40.1360.10">
    <property type="match status" value="1"/>
</dbReference>
<dbReference type="Gene3D" id="6.10.250.240">
    <property type="match status" value="1"/>
</dbReference>
<dbReference type="Gene3D" id="1.10.8.420">
    <property type="entry name" value="RecR Domain 1"/>
    <property type="match status" value="1"/>
</dbReference>
<dbReference type="HAMAP" id="MF_00017">
    <property type="entry name" value="RecR"/>
    <property type="match status" value="1"/>
</dbReference>
<dbReference type="InterPro" id="IPR000093">
    <property type="entry name" value="DNA_Rcmb_RecR"/>
</dbReference>
<dbReference type="InterPro" id="IPR023627">
    <property type="entry name" value="Rcmb_RecR"/>
</dbReference>
<dbReference type="InterPro" id="IPR015967">
    <property type="entry name" value="Rcmb_RecR_Znf"/>
</dbReference>
<dbReference type="InterPro" id="IPR006171">
    <property type="entry name" value="TOPRIM_dom"/>
</dbReference>
<dbReference type="InterPro" id="IPR034137">
    <property type="entry name" value="TOPRIM_RecR"/>
</dbReference>
<dbReference type="NCBIfam" id="TIGR00615">
    <property type="entry name" value="recR"/>
    <property type="match status" value="1"/>
</dbReference>
<dbReference type="PANTHER" id="PTHR30446">
    <property type="entry name" value="RECOMBINATION PROTEIN RECR"/>
    <property type="match status" value="1"/>
</dbReference>
<dbReference type="PANTHER" id="PTHR30446:SF0">
    <property type="entry name" value="RECOMBINATION PROTEIN RECR"/>
    <property type="match status" value="1"/>
</dbReference>
<dbReference type="Pfam" id="PF21175">
    <property type="entry name" value="RecR_C"/>
    <property type="match status" value="1"/>
</dbReference>
<dbReference type="Pfam" id="PF21176">
    <property type="entry name" value="RecR_HhH"/>
    <property type="match status" value="1"/>
</dbReference>
<dbReference type="Pfam" id="PF02132">
    <property type="entry name" value="RecR_ZnF"/>
    <property type="match status" value="1"/>
</dbReference>
<dbReference type="Pfam" id="PF13662">
    <property type="entry name" value="Toprim_4"/>
    <property type="match status" value="1"/>
</dbReference>
<dbReference type="SMART" id="SM00493">
    <property type="entry name" value="TOPRIM"/>
    <property type="match status" value="1"/>
</dbReference>
<dbReference type="SUPFAM" id="SSF111304">
    <property type="entry name" value="Recombination protein RecR"/>
    <property type="match status" value="1"/>
</dbReference>
<dbReference type="PROSITE" id="PS50880">
    <property type="entry name" value="TOPRIM"/>
    <property type="match status" value="1"/>
</dbReference>
<sequence length="199" mass="21372">MKFSPLVDELIQSLRCLPGVGPKSAQRMAFQLLERDRKAGAKLADSLAKAMSEVGHCQSCRTFTEETYCPICVSTKRGHSEVICVVETPADVLAIEAGGHFSGRYFVLLGHLSPLDGVGPDELGLDLLEQHLATGDVSELILATNPTVEGDATAHYIADMAKRHQLTVSRIAHGVPVGGELEYVDSTTLALSFNGRLPM</sequence>
<gene>
    <name evidence="1" type="primary">recR</name>
    <name type="ordered locus">Spea_1525</name>
</gene>
<organism>
    <name type="scientific">Shewanella pealeana (strain ATCC 700345 / ANG-SQ1)</name>
    <dbReference type="NCBI Taxonomy" id="398579"/>
    <lineage>
        <taxon>Bacteria</taxon>
        <taxon>Pseudomonadati</taxon>
        <taxon>Pseudomonadota</taxon>
        <taxon>Gammaproteobacteria</taxon>
        <taxon>Alteromonadales</taxon>
        <taxon>Shewanellaceae</taxon>
        <taxon>Shewanella</taxon>
    </lineage>
</organism>
<reference key="1">
    <citation type="submission" date="2007-10" db="EMBL/GenBank/DDBJ databases">
        <title>Complete sequence of Shewanella pealeana ATCC 700345.</title>
        <authorList>
            <consortium name="US DOE Joint Genome Institute"/>
            <person name="Copeland A."/>
            <person name="Lucas S."/>
            <person name="Lapidus A."/>
            <person name="Barry K."/>
            <person name="Glavina del Rio T."/>
            <person name="Dalin E."/>
            <person name="Tice H."/>
            <person name="Pitluck S."/>
            <person name="Chertkov O."/>
            <person name="Brettin T."/>
            <person name="Bruce D."/>
            <person name="Detter J.C."/>
            <person name="Han C."/>
            <person name="Schmutz J."/>
            <person name="Larimer F."/>
            <person name="Land M."/>
            <person name="Hauser L."/>
            <person name="Kyrpides N."/>
            <person name="Kim E."/>
            <person name="Zhao J.-S.Z."/>
            <person name="Manno D."/>
            <person name="Hawari J."/>
            <person name="Richardson P."/>
        </authorList>
    </citation>
    <scope>NUCLEOTIDE SEQUENCE [LARGE SCALE GENOMIC DNA]</scope>
    <source>
        <strain>ATCC 700345 / ANG-SQ1</strain>
    </source>
</reference>
<name>RECR_SHEPA</name>
<evidence type="ECO:0000255" key="1">
    <source>
        <dbReference type="HAMAP-Rule" id="MF_00017"/>
    </source>
</evidence>
<proteinExistence type="inferred from homology"/>
<accession>A8H2R3</accession>
<feature type="chain" id="PRO_1000074133" description="Recombination protein RecR">
    <location>
        <begin position="1"/>
        <end position="199"/>
    </location>
</feature>
<feature type="domain" description="Toprim" evidence="1">
    <location>
        <begin position="81"/>
        <end position="176"/>
    </location>
</feature>
<feature type="zinc finger region" description="C4-type" evidence="1">
    <location>
        <begin position="57"/>
        <end position="72"/>
    </location>
</feature>
<keyword id="KW-0227">DNA damage</keyword>
<keyword id="KW-0233">DNA recombination</keyword>
<keyword id="KW-0234">DNA repair</keyword>
<keyword id="KW-0479">Metal-binding</keyword>
<keyword id="KW-1185">Reference proteome</keyword>
<keyword id="KW-0862">Zinc</keyword>
<keyword id="KW-0863">Zinc-finger</keyword>
<comment type="function">
    <text evidence="1">May play a role in DNA repair. It seems to be involved in an RecBC-independent recombinational process of DNA repair. It may act with RecF and RecO.</text>
</comment>
<comment type="similarity">
    <text evidence="1">Belongs to the RecR family.</text>
</comment>
<protein>
    <recommendedName>
        <fullName evidence="1">Recombination protein RecR</fullName>
    </recommendedName>
</protein>